<reference key="1">
    <citation type="journal article" date="1998" name="Nature">
        <title>Deciphering the biology of Mycobacterium tuberculosis from the complete genome sequence.</title>
        <authorList>
            <person name="Cole S.T."/>
            <person name="Brosch R."/>
            <person name="Parkhill J."/>
            <person name="Garnier T."/>
            <person name="Churcher C.M."/>
            <person name="Harris D.E."/>
            <person name="Gordon S.V."/>
            <person name="Eiglmeier K."/>
            <person name="Gas S."/>
            <person name="Barry C.E. III"/>
            <person name="Tekaia F."/>
            <person name="Badcock K."/>
            <person name="Basham D."/>
            <person name="Brown D."/>
            <person name="Chillingworth T."/>
            <person name="Connor R."/>
            <person name="Davies R.M."/>
            <person name="Devlin K."/>
            <person name="Feltwell T."/>
            <person name="Gentles S."/>
            <person name="Hamlin N."/>
            <person name="Holroyd S."/>
            <person name="Hornsby T."/>
            <person name="Jagels K."/>
            <person name="Krogh A."/>
            <person name="McLean J."/>
            <person name="Moule S."/>
            <person name="Murphy L.D."/>
            <person name="Oliver S."/>
            <person name="Osborne J."/>
            <person name="Quail M.A."/>
            <person name="Rajandream M.A."/>
            <person name="Rogers J."/>
            <person name="Rutter S."/>
            <person name="Seeger K."/>
            <person name="Skelton S."/>
            <person name="Squares S."/>
            <person name="Squares R."/>
            <person name="Sulston J.E."/>
            <person name="Taylor K."/>
            <person name="Whitehead S."/>
            <person name="Barrell B.G."/>
        </authorList>
    </citation>
    <scope>NUCLEOTIDE SEQUENCE [LARGE SCALE GENOMIC DNA]</scope>
    <source>
        <strain>ATCC 25618 / H37Rv</strain>
    </source>
</reference>
<reference key="2">
    <citation type="submission" date="2013-11" db="EMBL/GenBank/DDBJ databases">
        <title>The genome sequence of Mycobacterium tuberculosis H37Rv.</title>
        <authorList>
            <consortium name="The Broad Institute Genome Sequencing Platform"/>
            <person name="Galagan J."/>
            <person name="Kreiswirth B."/>
            <person name="Dobos K."/>
            <person name="Fortune S."/>
            <person name="Fitzgerald M."/>
            <person name="Young S.K."/>
            <person name="Zeng Q."/>
            <person name="Gargeya S."/>
            <person name="Abouelleil A."/>
            <person name="Alvarado L."/>
            <person name="Berlin A.M."/>
            <person name="Chapman S.B."/>
            <person name="Gainer-Dewar J."/>
            <person name="Goldberg J."/>
            <person name="Gnerre S."/>
            <person name="Griggs A."/>
            <person name="Gujja S."/>
            <person name="Hansen M."/>
            <person name="Howarth C."/>
            <person name="Imamovic A."/>
            <person name="Larimer J."/>
            <person name="McCowan C."/>
            <person name="Murphy C."/>
            <person name="Pearson M."/>
            <person name="Poon T."/>
            <person name="Priest M."/>
            <person name="Roberts A."/>
            <person name="Saif S."/>
            <person name="Shea T."/>
            <person name="Sykes S."/>
            <person name="Wortman J."/>
            <person name="Nusbaum C."/>
            <person name="Birren B."/>
        </authorList>
    </citation>
    <scope>NUCLEOTIDE SEQUENCE [LARGE SCALE GENOMIC DNA]</scope>
    <source>
        <strain>ATCC 25618 / H37Rv</strain>
    </source>
</reference>
<reference key="3">
    <citation type="submission" date="2014-04" db="EMBL/GenBank/DDBJ databases">
        <title>The genome sequence of Mycobacterium tuberculosis H37Rv.</title>
        <authorList>
            <consortium name="The Broad Institute Genomics Platform"/>
            <consortium name="The Broad Institute Genome Sequencing Center for Infectious Disease"/>
            <person name="Earl A.M."/>
            <person name="Kreiswirth B."/>
            <person name="Gomez J."/>
            <person name="Victor T."/>
            <person name="Desjardins C."/>
            <person name="Abeel T."/>
            <person name="Young S."/>
            <person name="Zeng Q."/>
            <person name="Gargeya S."/>
            <person name="Abouelleil A."/>
            <person name="Alvarado L."/>
            <person name="Chapman S.B."/>
            <person name="Gainer-Dewar J."/>
            <person name="Goldberg J."/>
            <person name="Griggs A."/>
            <person name="Gujja S."/>
            <person name="Hansen M."/>
            <person name="Howarth C."/>
            <person name="Imamovic A."/>
            <person name="Larimer J."/>
            <person name="Murphy C."/>
            <person name="Naylor J."/>
            <person name="Pearson M."/>
            <person name="Poon T.W."/>
            <person name="Priest M."/>
            <person name="Roberts A."/>
            <person name="Saif S."/>
            <person name="Shea T."/>
            <person name="Sykes S."/>
            <person name="Wortman J."/>
            <person name="Nusbaum C."/>
            <person name="Birren B."/>
        </authorList>
    </citation>
    <scope>NUCLEOTIDE SEQUENCE [LARGE SCALE GENOMIC DNA]</scope>
    <source>
        <strain>ATCC 25618 / H37Rv</strain>
    </source>
</reference>
<reference key="4">
    <citation type="journal article" date="2011" name="Mol. Cell. Proteomics">
        <title>Proteogenomic analysis of Mycobacterium tuberculosis by high resolution mass spectrometry.</title>
        <authorList>
            <person name="Kelkar D.S."/>
            <person name="Kumar D."/>
            <person name="Kumar P."/>
            <person name="Balakrishnan L."/>
            <person name="Muthusamy B."/>
            <person name="Yadav A.K."/>
            <person name="Shrivastava P."/>
            <person name="Marimuthu A."/>
            <person name="Anand S."/>
            <person name="Sundaram H."/>
            <person name="Kingsbury R."/>
            <person name="Harsha H.C."/>
            <person name="Nair B."/>
            <person name="Prasad T.S."/>
            <person name="Chauhan D.S."/>
            <person name="Katoch K."/>
            <person name="Katoch V.M."/>
            <person name="Kumar P."/>
            <person name="Chaerkady R."/>
            <person name="Ramachandran S."/>
            <person name="Dash D."/>
            <person name="Pandey A."/>
        </authorList>
    </citation>
    <scope>IDENTIFICATION BY MASS SPECTROMETRY [LARGE SCALE ANALYSIS]</scope>
    <source>
        <strain>ATCC 25618 / H37Rv</strain>
    </source>
</reference>
<protein>
    <recommendedName>
        <fullName evidence="1">Uncharacterized protein Rv2386A/RVBD_2386A</fullName>
    </recommendedName>
</protein>
<keyword id="KW-1185">Reference proteome</keyword>
<evidence type="ECO:0000305" key="1"/>
<evidence type="ECO:0000312" key="2">
    <source>
        <dbReference type="EMBL" id="AFN50350.1"/>
    </source>
</evidence>
<evidence type="ECO:0000312" key="3">
    <source>
        <dbReference type="EMBL" id="KBJ30708.1"/>
    </source>
</evidence>
<accession>I6YD99</accession>
<organism>
    <name type="scientific">Mycobacterium tuberculosis (strain ATCC 25618 / H37Rv)</name>
    <dbReference type="NCBI Taxonomy" id="83332"/>
    <lineage>
        <taxon>Bacteria</taxon>
        <taxon>Bacillati</taxon>
        <taxon>Actinomycetota</taxon>
        <taxon>Actinomycetes</taxon>
        <taxon>Mycobacteriales</taxon>
        <taxon>Mycobacteriaceae</taxon>
        <taxon>Mycobacterium</taxon>
        <taxon>Mycobacterium tuberculosis complex</taxon>
    </lineage>
</organism>
<name>Y2386_MYCTU</name>
<dbReference type="EMBL" id="AL123456">
    <property type="status" value="NOT_ANNOTATED_CDS"/>
    <property type="molecule type" value="Genomic_DNA"/>
</dbReference>
<dbReference type="EMBL" id="CP003248">
    <property type="protein sequence ID" value="AFN50350.1"/>
    <property type="molecule type" value="Genomic_DNA"/>
</dbReference>
<dbReference type="EMBL" id="JLDD01000032">
    <property type="protein sequence ID" value="KBJ30708.1"/>
    <property type="molecule type" value="Genomic_DNA"/>
</dbReference>
<dbReference type="RefSeq" id="WP_003899302.1">
    <property type="nucleotide sequence ID" value="NZ_NVQJ01000029.1"/>
</dbReference>
<dbReference type="RefSeq" id="YP_009030039.1">
    <property type="nucleotide sequence ID" value="NC_000962.3"/>
</dbReference>
<dbReference type="GeneID" id="19394680"/>
<dbReference type="KEGG" id="mtu:Rv2386a"/>
<dbReference type="KEGG" id="mtv:RVBD_2386A"/>
<dbReference type="PATRIC" id="fig|83332.111.peg.2661"/>
<dbReference type="HOGENOM" id="CLU_189901_0_0_11"/>
<dbReference type="InParanoid" id="I6YD99"/>
<dbReference type="OrthoDB" id="4736050at2"/>
<dbReference type="Proteomes" id="UP000001584">
    <property type="component" value="Chromosome"/>
</dbReference>
<sequence>MFVIRLADGEEVHGECDELTINPATGVLTVCRVDGFEETTTHYSPSAWRSVTHRKRGVGVRPSLVSTAQ</sequence>
<proteinExistence type="evidence at protein level"/>
<feature type="chain" id="PRO_0000431253" description="Uncharacterized protein Rv2386A/RVBD_2386A">
    <location>
        <begin position="1"/>
        <end position="69"/>
    </location>
</feature>
<gene>
    <name evidence="1" type="ordered locus">Rv2386A</name>
    <name evidence="2" type="ordered locus">RVBD_2386A</name>
    <name evidence="3" type="ORF">P425_02481</name>
</gene>